<accession>P60938</accession>
<name>UPPP_GEOSL</name>
<feature type="chain" id="PRO_0000151154" description="Undecaprenyl-diphosphatase">
    <location>
        <begin position="1"/>
        <end position="269"/>
    </location>
</feature>
<feature type="transmembrane region" description="Helical" evidence="1">
    <location>
        <begin position="1"/>
        <end position="21"/>
    </location>
</feature>
<feature type="transmembrane region" description="Helical" evidence="1">
    <location>
        <begin position="40"/>
        <end position="59"/>
    </location>
</feature>
<feature type="transmembrane region" description="Helical" evidence="1">
    <location>
        <begin position="87"/>
        <end position="107"/>
    </location>
</feature>
<feature type="transmembrane region" description="Helical" evidence="1">
    <location>
        <begin position="117"/>
        <end position="137"/>
    </location>
</feature>
<feature type="transmembrane region" description="Helical" evidence="1">
    <location>
        <begin position="147"/>
        <end position="166"/>
    </location>
</feature>
<feature type="transmembrane region" description="Helical" evidence="1">
    <location>
        <begin position="188"/>
        <end position="208"/>
    </location>
</feature>
<feature type="transmembrane region" description="Helical" evidence="1">
    <location>
        <begin position="220"/>
        <end position="240"/>
    </location>
</feature>
<feature type="transmembrane region" description="Helical" evidence="1">
    <location>
        <begin position="248"/>
        <end position="268"/>
    </location>
</feature>
<protein>
    <recommendedName>
        <fullName evidence="1">Undecaprenyl-diphosphatase</fullName>
        <ecNumber evidence="1">3.6.1.27</ecNumber>
    </recommendedName>
    <alternativeName>
        <fullName evidence="1">Bacitracin resistance protein</fullName>
    </alternativeName>
    <alternativeName>
        <fullName evidence="1">Undecaprenyl pyrophosphate phosphatase</fullName>
    </alternativeName>
</protein>
<dbReference type="EC" id="3.6.1.27" evidence="1"/>
<dbReference type="EMBL" id="AE017180">
    <property type="protein sequence ID" value="AAR33719.1"/>
    <property type="molecule type" value="Genomic_DNA"/>
</dbReference>
<dbReference type="RefSeq" id="NP_951446.1">
    <property type="nucleotide sequence ID" value="NC_002939.5"/>
</dbReference>
<dbReference type="RefSeq" id="WP_010941055.1">
    <property type="nucleotide sequence ID" value="NC_002939.5"/>
</dbReference>
<dbReference type="SMR" id="P60938"/>
<dbReference type="FunCoup" id="P60938">
    <property type="interactions" value="388"/>
</dbReference>
<dbReference type="STRING" id="243231.GSU0387"/>
<dbReference type="DNASU" id="2686573"/>
<dbReference type="EnsemblBacteria" id="AAR33719">
    <property type="protein sequence ID" value="AAR33719"/>
    <property type="gene ID" value="GSU0387"/>
</dbReference>
<dbReference type="KEGG" id="gsu:GSU0387"/>
<dbReference type="PATRIC" id="fig|243231.5.peg.385"/>
<dbReference type="eggNOG" id="COG1968">
    <property type="taxonomic scope" value="Bacteria"/>
</dbReference>
<dbReference type="HOGENOM" id="CLU_060296_1_0_7"/>
<dbReference type="InParanoid" id="P60938"/>
<dbReference type="OrthoDB" id="9808289at2"/>
<dbReference type="Proteomes" id="UP000000577">
    <property type="component" value="Chromosome"/>
</dbReference>
<dbReference type="GO" id="GO:0005886">
    <property type="term" value="C:plasma membrane"/>
    <property type="evidence" value="ECO:0000318"/>
    <property type="project" value="GO_Central"/>
</dbReference>
<dbReference type="GO" id="GO:0050380">
    <property type="term" value="F:undecaprenyl-diphosphatase activity"/>
    <property type="evidence" value="ECO:0000318"/>
    <property type="project" value="GO_Central"/>
</dbReference>
<dbReference type="GO" id="GO:0071555">
    <property type="term" value="P:cell wall organization"/>
    <property type="evidence" value="ECO:0007669"/>
    <property type="project" value="UniProtKB-KW"/>
</dbReference>
<dbReference type="GO" id="GO:0009252">
    <property type="term" value="P:peptidoglycan biosynthetic process"/>
    <property type="evidence" value="ECO:0007669"/>
    <property type="project" value="UniProtKB-KW"/>
</dbReference>
<dbReference type="GO" id="GO:0000270">
    <property type="term" value="P:peptidoglycan metabolic process"/>
    <property type="evidence" value="ECO:0000318"/>
    <property type="project" value="GO_Central"/>
</dbReference>
<dbReference type="GO" id="GO:0008360">
    <property type="term" value="P:regulation of cell shape"/>
    <property type="evidence" value="ECO:0007669"/>
    <property type="project" value="UniProtKB-KW"/>
</dbReference>
<dbReference type="GO" id="GO:0046677">
    <property type="term" value="P:response to antibiotic"/>
    <property type="evidence" value="ECO:0007669"/>
    <property type="project" value="UniProtKB-UniRule"/>
</dbReference>
<dbReference type="HAMAP" id="MF_01006">
    <property type="entry name" value="Undec_diphosphatase"/>
    <property type="match status" value="1"/>
</dbReference>
<dbReference type="InterPro" id="IPR003824">
    <property type="entry name" value="UppP"/>
</dbReference>
<dbReference type="NCBIfam" id="NF001393">
    <property type="entry name" value="PRK00281.2-4"/>
    <property type="match status" value="1"/>
</dbReference>
<dbReference type="NCBIfam" id="TIGR00753">
    <property type="entry name" value="undec_PP_bacA"/>
    <property type="match status" value="1"/>
</dbReference>
<dbReference type="PANTHER" id="PTHR30622">
    <property type="entry name" value="UNDECAPRENYL-DIPHOSPHATASE"/>
    <property type="match status" value="1"/>
</dbReference>
<dbReference type="PANTHER" id="PTHR30622:SF4">
    <property type="entry name" value="UNDECAPRENYL-DIPHOSPHATASE"/>
    <property type="match status" value="1"/>
</dbReference>
<dbReference type="Pfam" id="PF02673">
    <property type="entry name" value="BacA"/>
    <property type="match status" value="1"/>
</dbReference>
<reference key="1">
    <citation type="journal article" date="2003" name="Science">
        <title>Genome of Geobacter sulfurreducens: metal reduction in subsurface environments.</title>
        <authorList>
            <person name="Methe B.A."/>
            <person name="Nelson K.E."/>
            <person name="Eisen J.A."/>
            <person name="Paulsen I.T."/>
            <person name="Nelson W.C."/>
            <person name="Heidelberg J.F."/>
            <person name="Wu D."/>
            <person name="Wu M."/>
            <person name="Ward N.L."/>
            <person name="Beanan M.J."/>
            <person name="Dodson R.J."/>
            <person name="Madupu R."/>
            <person name="Brinkac L.M."/>
            <person name="Daugherty S.C."/>
            <person name="DeBoy R.T."/>
            <person name="Durkin A.S."/>
            <person name="Gwinn M.L."/>
            <person name="Kolonay J.F."/>
            <person name="Sullivan S.A."/>
            <person name="Haft D.H."/>
            <person name="Selengut J."/>
            <person name="Davidsen T.M."/>
            <person name="Zafar N."/>
            <person name="White O."/>
            <person name="Tran B."/>
            <person name="Romero C."/>
            <person name="Forberger H.A."/>
            <person name="Weidman J.F."/>
            <person name="Khouri H.M."/>
            <person name="Feldblyum T.V."/>
            <person name="Utterback T.R."/>
            <person name="Van Aken S.E."/>
            <person name="Lovley D.R."/>
            <person name="Fraser C.M."/>
        </authorList>
    </citation>
    <scope>NUCLEOTIDE SEQUENCE [LARGE SCALE GENOMIC DNA]</scope>
    <source>
        <strain>ATCC 51573 / DSM 12127 / PCA</strain>
    </source>
</reference>
<organism>
    <name type="scientific">Geobacter sulfurreducens (strain ATCC 51573 / DSM 12127 / PCA)</name>
    <dbReference type="NCBI Taxonomy" id="243231"/>
    <lineage>
        <taxon>Bacteria</taxon>
        <taxon>Pseudomonadati</taxon>
        <taxon>Thermodesulfobacteriota</taxon>
        <taxon>Desulfuromonadia</taxon>
        <taxon>Geobacterales</taxon>
        <taxon>Geobacteraceae</taxon>
        <taxon>Geobacter</taxon>
    </lineage>
</organism>
<gene>
    <name evidence="1" type="primary">uppP</name>
    <name type="synonym">bacA</name>
    <name type="synonym">upk</name>
    <name type="ordered locus">GSU0387</name>
</gene>
<sequence length="269" mass="28742">MDIMHAAVLGILQGLTEILPISSSAHLILVPWLLGWPESGLTFDVGLHVGTLIALCVYFRRDIAYLISDAITGLREGFGSQTSRLPFFIIAGTVPAAIAGKTLEKPIEEFFRGSHTLIALLLIAFGLLLALADTTGPKRWRMDRVDLRGALLIGLAQCLALIPGVSRSGITITAALFLGFTRDTAARFSFLLSLPIVAGAGILKMGELARHGIPAGELAPLLAGMATSAVSGYLGVALLLRLVQRYSLYPFVWYRLLAGGAVLAYLFAR</sequence>
<proteinExistence type="inferred from homology"/>
<evidence type="ECO:0000255" key="1">
    <source>
        <dbReference type="HAMAP-Rule" id="MF_01006"/>
    </source>
</evidence>
<comment type="function">
    <text evidence="1">Catalyzes the dephosphorylation of undecaprenyl diphosphate (UPP). Confers resistance to bacitracin.</text>
</comment>
<comment type="catalytic activity">
    <reaction evidence="1">
        <text>di-trans,octa-cis-undecaprenyl diphosphate + H2O = di-trans,octa-cis-undecaprenyl phosphate + phosphate + H(+)</text>
        <dbReference type="Rhea" id="RHEA:28094"/>
        <dbReference type="ChEBI" id="CHEBI:15377"/>
        <dbReference type="ChEBI" id="CHEBI:15378"/>
        <dbReference type="ChEBI" id="CHEBI:43474"/>
        <dbReference type="ChEBI" id="CHEBI:58405"/>
        <dbReference type="ChEBI" id="CHEBI:60392"/>
        <dbReference type="EC" id="3.6.1.27"/>
    </reaction>
</comment>
<comment type="subcellular location">
    <subcellularLocation>
        <location evidence="1">Cell inner membrane</location>
        <topology evidence="1">Multi-pass membrane protein</topology>
    </subcellularLocation>
</comment>
<comment type="miscellaneous">
    <text>Bacitracin is thought to be involved in the inhibition of peptidoglycan synthesis by sequestering undecaprenyl diphosphate, thereby reducing the pool of lipid carrier available.</text>
</comment>
<comment type="similarity">
    <text evidence="1">Belongs to the UppP family.</text>
</comment>
<keyword id="KW-0046">Antibiotic resistance</keyword>
<keyword id="KW-0997">Cell inner membrane</keyword>
<keyword id="KW-1003">Cell membrane</keyword>
<keyword id="KW-0133">Cell shape</keyword>
<keyword id="KW-0961">Cell wall biogenesis/degradation</keyword>
<keyword id="KW-0378">Hydrolase</keyword>
<keyword id="KW-0472">Membrane</keyword>
<keyword id="KW-0573">Peptidoglycan synthesis</keyword>
<keyword id="KW-1185">Reference proteome</keyword>
<keyword id="KW-0812">Transmembrane</keyword>
<keyword id="KW-1133">Transmembrane helix</keyword>